<reference key="1">
    <citation type="journal article" date="2009" name="PLoS Pathog.">
        <title>Genomic evidence for the evolution of Streptococcus equi: host restriction, increased virulence, and genetic exchange with human pathogens.</title>
        <authorList>
            <person name="Holden M.T.G."/>
            <person name="Heather Z."/>
            <person name="Paillot R."/>
            <person name="Steward K.F."/>
            <person name="Webb K."/>
            <person name="Ainslie F."/>
            <person name="Jourdan T."/>
            <person name="Bason N.C."/>
            <person name="Holroyd N.E."/>
            <person name="Mungall K."/>
            <person name="Quail M.A."/>
            <person name="Sanders M."/>
            <person name="Simmonds M."/>
            <person name="Willey D."/>
            <person name="Brooks K."/>
            <person name="Aanensen D.M."/>
            <person name="Spratt B.G."/>
            <person name="Jolley K.A."/>
            <person name="Maiden M.C.J."/>
            <person name="Kehoe M."/>
            <person name="Chanter N."/>
            <person name="Bentley S.D."/>
            <person name="Robinson C."/>
            <person name="Maskell D.J."/>
            <person name="Parkhill J."/>
            <person name="Waller A.S."/>
        </authorList>
    </citation>
    <scope>NUCLEOTIDE SEQUENCE [LARGE SCALE GENOMIC DNA]</scope>
    <source>
        <strain>H70</strain>
    </source>
</reference>
<comment type="function">
    <text evidence="1">This protein binds to the 23S rRNA, and is important in its secondary structure. It is located near the subunit interface in the base of the L7/L12 stalk, and near the tRNA binding site of the peptidyltransferase center.</text>
</comment>
<comment type="subunit">
    <text evidence="1">Part of the 50S ribosomal subunit.</text>
</comment>
<comment type="similarity">
    <text evidence="1">Belongs to the universal ribosomal protein uL6 family.</text>
</comment>
<name>RL6_STRS7</name>
<proteinExistence type="inferred from homology"/>
<keyword id="KW-0687">Ribonucleoprotein</keyword>
<keyword id="KW-0689">Ribosomal protein</keyword>
<keyword id="KW-0694">RNA-binding</keyword>
<keyword id="KW-0699">rRNA-binding</keyword>
<organism>
    <name type="scientific">Streptococcus equi subsp. zooepidemicus (strain H70)</name>
    <dbReference type="NCBI Taxonomy" id="553483"/>
    <lineage>
        <taxon>Bacteria</taxon>
        <taxon>Bacillati</taxon>
        <taxon>Bacillota</taxon>
        <taxon>Bacilli</taxon>
        <taxon>Lactobacillales</taxon>
        <taxon>Streptococcaceae</taxon>
        <taxon>Streptococcus</taxon>
    </lineage>
</organism>
<feature type="chain" id="PRO_1000214937" description="Large ribosomal subunit protein uL6">
    <location>
        <begin position="1"/>
        <end position="178"/>
    </location>
</feature>
<gene>
    <name evidence="1" type="primary">rplF</name>
    <name type="ordered locus">SZO_00650</name>
</gene>
<sequence length="178" mass="19471">MSRIGNKVIIIPAGVEIINNDNVVTVKGPKGELTREFNKNIEIKVEGNEMTLVRPDDSKEMKTIHGTTRANLNNMVVGVSEGFKKELEMKGVGYRAQLQGSKLVLSVGKSHQDEVEAPEGITFTVANPTSISVEGINKEVVGQTAAYIRSLRSPEPYKGKGIRYVGEYVRLKEGKTGK</sequence>
<protein>
    <recommendedName>
        <fullName evidence="1">Large ribosomal subunit protein uL6</fullName>
    </recommendedName>
    <alternativeName>
        <fullName evidence="2">50S ribosomal protein L6</fullName>
    </alternativeName>
</protein>
<dbReference type="EMBL" id="FM204884">
    <property type="protein sequence ID" value="CAW97670.1"/>
    <property type="molecule type" value="Genomic_DNA"/>
</dbReference>
<dbReference type="SMR" id="C0ME20"/>
<dbReference type="KEGG" id="seq:SZO_00650"/>
<dbReference type="eggNOG" id="COG0097">
    <property type="taxonomic scope" value="Bacteria"/>
</dbReference>
<dbReference type="HOGENOM" id="CLU_065464_1_2_9"/>
<dbReference type="Proteomes" id="UP000001368">
    <property type="component" value="Chromosome"/>
</dbReference>
<dbReference type="GO" id="GO:0022625">
    <property type="term" value="C:cytosolic large ribosomal subunit"/>
    <property type="evidence" value="ECO:0007669"/>
    <property type="project" value="TreeGrafter"/>
</dbReference>
<dbReference type="GO" id="GO:0019843">
    <property type="term" value="F:rRNA binding"/>
    <property type="evidence" value="ECO:0007669"/>
    <property type="project" value="UniProtKB-UniRule"/>
</dbReference>
<dbReference type="GO" id="GO:0003735">
    <property type="term" value="F:structural constituent of ribosome"/>
    <property type="evidence" value="ECO:0007669"/>
    <property type="project" value="InterPro"/>
</dbReference>
<dbReference type="GO" id="GO:0002181">
    <property type="term" value="P:cytoplasmic translation"/>
    <property type="evidence" value="ECO:0007669"/>
    <property type="project" value="TreeGrafter"/>
</dbReference>
<dbReference type="FunFam" id="3.90.930.12:FF:000001">
    <property type="entry name" value="50S ribosomal protein L6"/>
    <property type="match status" value="1"/>
</dbReference>
<dbReference type="FunFam" id="3.90.930.12:FF:000002">
    <property type="entry name" value="50S ribosomal protein L6"/>
    <property type="match status" value="1"/>
</dbReference>
<dbReference type="Gene3D" id="3.90.930.12">
    <property type="entry name" value="Ribosomal protein L6, alpha-beta domain"/>
    <property type="match status" value="2"/>
</dbReference>
<dbReference type="HAMAP" id="MF_01365_B">
    <property type="entry name" value="Ribosomal_uL6_B"/>
    <property type="match status" value="1"/>
</dbReference>
<dbReference type="InterPro" id="IPR000702">
    <property type="entry name" value="Ribosomal_uL6-like"/>
</dbReference>
<dbReference type="InterPro" id="IPR036789">
    <property type="entry name" value="Ribosomal_uL6-like_a/b-dom_sf"/>
</dbReference>
<dbReference type="InterPro" id="IPR020040">
    <property type="entry name" value="Ribosomal_uL6_a/b-dom"/>
</dbReference>
<dbReference type="InterPro" id="IPR019906">
    <property type="entry name" value="Ribosomal_uL6_bac-type"/>
</dbReference>
<dbReference type="InterPro" id="IPR002358">
    <property type="entry name" value="Ribosomal_uL6_CS"/>
</dbReference>
<dbReference type="NCBIfam" id="TIGR03654">
    <property type="entry name" value="L6_bact"/>
    <property type="match status" value="1"/>
</dbReference>
<dbReference type="PANTHER" id="PTHR11655">
    <property type="entry name" value="60S/50S RIBOSOMAL PROTEIN L6/L9"/>
    <property type="match status" value="1"/>
</dbReference>
<dbReference type="PANTHER" id="PTHR11655:SF14">
    <property type="entry name" value="LARGE RIBOSOMAL SUBUNIT PROTEIN UL6M"/>
    <property type="match status" value="1"/>
</dbReference>
<dbReference type="Pfam" id="PF00347">
    <property type="entry name" value="Ribosomal_L6"/>
    <property type="match status" value="2"/>
</dbReference>
<dbReference type="PIRSF" id="PIRSF002162">
    <property type="entry name" value="Ribosomal_L6"/>
    <property type="match status" value="1"/>
</dbReference>
<dbReference type="PRINTS" id="PR00059">
    <property type="entry name" value="RIBOSOMALL6"/>
</dbReference>
<dbReference type="SUPFAM" id="SSF56053">
    <property type="entry name" value="Ribosomal protein L6"/>
    <property type="match status" value="2"/>
</dbReference>
<dbReference type="PROSITE" id="PS00525">
    <property type="entry name" value="RIBOSOMAL_L6_1"/>
    <property type="match status" value="1"/>
</dbReference>
<accession>C0ME20</accession>
<evidence type="ECO:0000255" key="1">
    <source>
        <dbReference type="HAMAP-Rule" id="MF_01365"/>
    </source>
</evidence>
<evidence type="ECO:0000305" key="2"/>